<reference key="1">
    <citation type="journal article" date="2013" name="Nature">
        <title>The zebrafish reference genome sequence and its relationship to the human genome.</title>
        <authorList>
            <person name="Howe K."/>
            <person name="Clark M.D."/>
            <person name="Torroja C.F."/>
            <person name="Torrance J."/>
            <person name="Berthelot C."/>
            <person name="Muffato M."/>
            <person name="Collins J.E."/>
            <person name="Humphray S."/>
            <person name="McLaren K."/>
            <person name="Matthews L."/>
            <person name="McLaren S."/>
            <person name="Sealy I."/>
            <person name="Caccamo M."/>
            <person name="Churcher C."/>
            <person name="Scott C."/>
            <person name="Barrett J.C."/>
            <person name="Koch R."/>
            <person name="Rauch G.J."/>
            <person name="White S."/>
            <person name="Chow W."/>
            <person name="Kilian B."/>
            <person name="Quintais L.T."/>
            <person name="Guerra-Assuncao J.A."/>
            <person name="Zhou Y."/>
            <person name="Gu Y."/>
            <person name="Yen J."/>
            <person name="Vogel J.H."/>
            <person name="Eyre T."/>
            <person name="Redmond S."/>
            <person name="Banerjee R."/>
            <person name="Chi J."/>
            <person name="Fu B."/>
            <person name="Langley E."/>
            <person name="Maguire S.F."/>
            <person name="Laird G.K."/>
            <person name="Lloyd D."/>
            <person name="Kenyon E."/>
            <person name="Donaldson S."/>
            <person name="Sehra H."/>
            <person name="Almeida-King J."/>
            <person name="Loveland J."/>
            <person name="Trevanion S."/>
            <person name="Jones M."/>
            <person name="Quail M."/>
            <person name="Willey D."/>
            <person name="Hunt A."/>
            <person name="Burton J."/>
            <person name="Sims S."/>
            <person name="McLay K."/>
            <person name="Plumb B."/>
            <person name="Davis J."/>
            <person name="Clee C."/>
            <person name="Oliver K."/>
            <person name="Clark R."/>
            <person name="Riddle C."/>
            <person name="Elliot D."/>
            <person name="Threadgold G."/>
            <person name="Harden G."/>
            <person name="Ware D."/>
            <person name="Begum S."/>
            <person name="Mortimore B."/>
            <person name="Kerry G."/>
            <person name="Heath P."/>
            <person name="Phillimore B."/>
            <person name="Tracey A."/>
            <person name="Corby N."/>
            <person name="Dunn M."/>
            <person name="Johnson C."/>
            <person name="Wood J."/>
            <person name="Clark S."/>
            <person name="Pelan S."/>
            <person name="Griffiths G."/>
            <person name="Smith M."/>
            <person name="Glithero R."/>
            <person name="Howden P."/>
            <person name="Barker N."/>
            <person name="Lloyd C."/>
            <person name="Stevens C."/>
            <person name="Harley J."/>
            <person name="Holt K."/>
            <person name="Panagiotidis G."/>
            <person name="Lovell J."/>
            <person name="Beasley H."/>
            <person name="Henderson C."/>
            <person name="Gordon D."/>
            <person name="Auger K."/>
            <person name="Wright D."/>
            <person name="Collins J."/>
            <person name="Raisen C."/>
            <person name="Dyer L."/>
            <person name="Leung K."/>
            <person name="Robertson L."/>
            <person name="Ambridge K."/>
            <person name="Leongamornlert D."/>
            <person name="McGuire S."/>
            <person name="Gilderthorp R."/>
            <person name="Griffiths C."/>
            <person name="Manthravadi D."/>
            <person name="Nichol S."/>
            <person name="Barker G."/>
            <person name="Whitehead S."/>
            <person name="Kay M."/>
            <person name="Brown J."/>
            <person name="Murnane C."/>
            <person name="Gray E."/>
            <person name="Humphries M."/>
            <person name="Sycamore N."/>
            <person name="Barker D."/>
            <person name="Saunders D."/>
            <person name="Wallis J."/>
            <person name="Babbage A."/>
            <person name="Hammond S."/>
            <person name="Mashreghi-Mohammadi M."/>
            <person name="Barr L."/>
            <person name="Martin S."/>
            <person name="Wray P."/>
            <person name="Ellington A."/>
            <person name="Matthews N."/>
            <person name="Ellwood M."/>
            <person name="Woodmansey R."/>
            <person name="Clark G."/>
            <person name="Cooper J."/>
            <person name="Tromans A."/>
            <person name="Grafham D."/>
            <person name="Skuce C."/>
            <person name="Pandian R."/>
            <person name="Andrews R."/>
            <person name="Harrison E."/>
            <person name="Kimberley A."/>
            <person name="Garnett J."/>
            <person name="Fosker N."/>
            <person name="Hall R."/>
            <person name="Garner P."/>
            <person name="Kelly D."/>
            <person name="Bird C."/>
            <person name="Palmer S."/>
            <person name="Gehring I."/>
            <person name="Berger A."/>
            <person name="Dooley C.M."/>
            <person name="Ersan-Urun Z."/>
            <person name="Eser C."/>
            <person name="Geiger H."/>
            <person name="Geisler M."/>
            <person name="Karotki L."/>
            <person name="Kirn A."/>
            <person name="Konantz J."/>
            <person name="Konantz M."/>
            <person name="Oberlander M."/>
            <person name="Rudolph-Geiger S."/>
            <person name="Teucke M."/>
            <person name="Lanz C."/>
            <person name="Raddatz G."/>
            <person name="Osoegawa K."/>
            <person name="Zhu B."/>
            <person name="Rapp A."/>
            <person name="Widaa S."/>
            <person name="Langford C."/>
            <person name="Yang F."/>
            <person name="Schuster S.C."/>
            <person name="Carter N.P."/>
            <person name="Harrow J."/>
            <person name="Ning Z."/>
            <person name="Herrero J."/>
            <person name="Searle S.M."/>
            <person name="Enright A."/>
            <person name="Geisler R."/>
            <person name="Plasterk R.H."/>
            <person name="Lee C."/>
            <person name="Westerfield M."/>
            <person name="de Jong P.J."/>
            <person name="Zon L.I."/>
            <person name="Postlethwait J.H."/>
            <person name="Nusslein-Volhard C."/>
            <person name="Hubbard T.J."/>
            <person name="Roest Crollius H."/>
            <person name="Rogers J."/>
            <person name="Stemple D.L."/>
        </authorList>
    </citation>
    <scope>NUCLEOTIDE SEQUENCE [LARGE SCALE GENOMIC DNA]</scope>
    <source>
        <strain>Tuebingen</strain>
    </source>
</reference>
<reference key="2">
    <citation type="submission" date="2003-07" db="EMBL/GenBank/DDBJ databases">
        <authorList>
            <consortium name="NIH - Zebrafish Gene Collection (ZGC) project"/>
        </authorList>
    </citation>
    <scope>NUCLEOTIDE SEQUENCE [LARGE SCALE MRNA]</scope>
    <source>
        <tissue>Kidney</tissue>
    </source>
</reference>
<accession>Q7T2D1</accession>
<accession>B0V2U0</accession>
<gene>
    <name type="primary">rdh10b</name>
    <name type="synonym">rdh10</name>
    <name type="ORF">si:ch211-193n21.3</name>
</gene>
<name>RD10B_DANRE</name>
<evidence type="ECO:0000250" key="1"/>
<evidence type="ECO:0000255" key="2"/>
<evidence type="ECO:0000255" key="3">
    <source>
        <dbReference type="PROSITE-ProRule" id="PRU10001"/>
    </source>
</evidence>
<evidence type="ECO:0000305" key="4"/>
<proteinExistence type="evidence at transcript level"/>
<feature type="chain" id="PRO_0000307685" description="Retinol dehydrogenase 10-B">
    <location>
        <begin position="1"/>
        <end position="336"/>
    </location>
</feature>
<feature type="transmembrane region" description="Helical; Signal-anchor" evidence="2">
    <location>
        <begin position="7"/>
        <end position="27"/>
    </location>
</feature>
<feature type="active site" description="Proton acceptor" evidence="3">
    <location>
        <position position="205"/>
    </location>
</feature>
<feature type="binding site" evidence="1">
    <location>
        <begin position="40"/>
        <end position="64"/>
    </location>
    <ligand>
        <name>NADP(+)</name>
        <dbReference type="ChEBI" id="CHEBI:58349"/>
    </ligand>
</feature>
<feature type="binding site" evidence="1">
    <location>
        <position position="192"/>
    </location>
    <ligand>
        <name>substrate</name>
    </ligand>
</feature>
<feature type="sequence conflict" description="In Ref. 2; AAH54596." evidence="4" ref="2">
    <original>S</original>
    <variation>R</variation>
    <location>
        <position position="96"/>
    </location>
</feature>
<sequence>MNIATELFVVTFKIIWSFVLAGAKWFIRPREKSVEGQVCVITGAGSGLGRLFALEFARRRATLVLWDINRQSNEETAEMAREIYRQLKPSTGSSDSVQELPLLQPKVYTYMCDVSKRESVYLTAEKVRSEVGDIDLLINNAGVVSGRHLLDCPDELIERTMMVNCHAHFWTTKAFLPKMLELNHGHIVTVASSLGLFTTAGVEDYCASKFGAIGFHESLSHELKAADKDGIKMTLVCPFLVDTGMFEGCKIRKEMAPFFPPLKPEYCVKQAMRAILTDQPMICTPRVMYMVTFMKTVLPFDAIVCMYKFIGADKCMYPFLAQRKESTNNNESKTGI</sequence>
<keyword id="KW-0256">Endoplasmic reticulum</keyword>
<keyword id="KW-0443">Lipid metabolism</keyword>
<keyword id="KW-0472">Membrane</keyword>
<keyword id="KW-0492">Microsome</keyword>
<keyword id="KW-0521">NADP</keyword>
<keyword id="KW-0560">Oxidoreductase</keyword>
<keyword id="KW-1185">Reference proteome</keyword>
<keyword id="KW-0735">Signal-anchor</keyword>
<keyword id="KW-0812">Transmembrane</keyword>
<keyword id="KW-1133">Transmembrane helix</keyword>
<dbReference type="EC" id="1.1.1.300"/>
<dbReference type="EMBL" id="CT027743">
    <property type="protein sequence ID" value="CAQ15477.1"/>
    <property type="molecule type" value="Genomic_DNA"/>
</dbReference>
<dbReference type="EMBL" id="BC054596">
    <property type="protein sequence ID" value="AAH54596.1"/>
    <property type="molecule type" value="mRNA"/>
</dbReference>
<dbReference type="RefSeq" id="NP_958488.1">
    <property type="nucleotide sequence ID" value="NM_201331.1"/>
</dbReference>
<dbReference type="SMR" id="Q7T2D1"/>
<dbReference type="FunCoup" id="Q7T2D1">
    <property type="interactions" value="9"/>
</dbReference>
<dbReference type="STRING" id="7955.ENSDARP00000011528"/>
<dbReference type="PaxDb" id="7955-ENSDARP00000104887"/>
<dbReference type="Ensembl" id="ENSDART00000004903">
    <property type="protein sequence ID" value="ENSDARP00000011528"/>
    <property type="gene ID" value="ENSDARG00000012369"/>
</dbReference>
<dbReference type="GeneID" id="378722"/>
<dbReference type="KEGG" id="dre:378722"/>
<dbReference type="AGR" id="ZFIN:ZDB-GENE-030909-7"/>
<dbReference type="CTD" id="378722"/>
<dbReference type="ZFIN" id="ZDB-GENE-030909-7">
    <property type="gene designation" value="rdh10b"/>
</dbReference>
<dbReference type="eggNOG" id="KOG1201">
    <property type="taxonomic scope" value="Eukaryota"/>
</dbReference>
<dbReference type="HOGENOM" id="CLU_010194_2_5_1"/>
<dbReference type="InParanoid" id="Q7T2D1"/>
<dbReference type="OMA" id="SVEGQVC"/>
<dbReference type="OrthoDB" id="5840532at2759"/>
<dbReference type="PhylomeDB" id="Q7T2D1"/>
<dbReference type="TreeFam" id="TF312837"/>
<dbReference type="UniPathway" id="UPA00912"/>
<dbReference type="PRO" id="PR:Q7T2D1"/>
<dbReference type="Proteomes" id="UP000000437">
    <property type="component" value="Chromosome 2"/>
</dbReference>
<dbReference type="Bgee" id="ENSDARG00000012369">
    <property type="expression patterns" value="Expressed in cleaving embryo and 34 other cell types or tissues"/>
</dbReference>
<dbReference type="GO" id="GO:0005789">
    <property type="term" value="C:endoplasmic reticulum membrane"/>
    <property type="evidence" value="ECO:0007669"/>
    <property type="project" value="UniProtKB-SubCell"/>
</dbReference>
<dbReference type="GO" id="GO:0005811">
    <property type="term" value="C:lipid droplet"/>
    <property type="evidence" value="ECO:0000318"/>
    <property type="project" value="GO_Central"/>
</dbReference>
<dbReference type="GO" id="GO:0052650">
    <property type="term" value="F:all-trans-retinol dehydrogenase (NADP+) activity"/>
    <property type="evidence" value="ECO:0007669"/>
    <property type="project" value="UniProtKB-EC"/>
</dbReference>
<dbReference type="GO" id="GO:0016616">
    <property type="term" value="F:oxidoreductase activity, acting on the CH-OH group of donors, NAD or NADP as acceptor"/>
    <property type="evidence" value="ECO:0000318"/>
    <property type="project" value="GO_Central"/>
</dbReference>
<dbReference type="CDD" id="cd05339">
    <property type="entry name" value="17beta-HSDXI-like_SDR_c"/>
    <property type="match status" value="1"/>
</dbReference>
<dbReference type="FunFam" id="3.40.50.720:FF:000177">
    <property type="entry name" value="Retinol dehydrogenase 10"/>
    <property type="match status" value="1"/>
</dbReference>
<dbReference type="Gene3D" id="3.40.50.720">
    <property type="entry name" value="NAD(P)-binding Rossmann-like Domain"/>
    <property type="match status" value="1"/>
</dbReference>
<dbReference type="InterPro" id="IPR036291">
    <property type="entry name" value="NAD(P)-bd_dom_sf"/>
</dbReference>
<dbReference type="InterPro" id="IPR020904">
    <property type="entry name" value="Sc_DH/Rdtase_CS"/>
</dbReference>
<dbReference type="InterPro" id="IPR002347">
    <property type="entry name" value="SDR_fam"/>
</dbReference>
<dbReference type="PANTHER" id="PTHR24322">
    <property type="entry name" value="PKSB"/>
    <property type="match status" value="1"/>
</dbReference>
<dbReference type="PANTHER" id="PTHR24322:SF745">
    <property type="entry name" value="RETINOL DEHYDROGENASE 10-A-RELATED"/>
    <property type="match status" value="1"/>
</dbReference>
<dbReference type="Pfam" id="PF00106">
    <property type="entry name" value="adh_short"/>
    <property type="match status" value="1"/>
</dbReference>
<dbReference type="PRINTS" id="PR00081">
    <property type="entry name" value="GDHRDH"/>
</dbReference>
<dbReference type="PRINTS" id="PR00080">
    <property type="entry name" value="SDRFAMILY"/>
</dbReference>
<dbReference type="SUPFAM" id="SSF51735">
    <property type="entry name" value="NAD(P)-binding Rossmann-fold domains"/>
    <property type="match status" value="1"/>
</dbReference>
<dbReference type="PROSITE" id="PS00061">
    <property type="entry name" value="ADH_SHORT"/>
    <property type="match status" value="1"/>
</dbReference>
<protein>
    <recommendedName>
        <fullName>Retinol dehydrogenase 10-B</fullName>
        <ecNumber>1.1.1.300</ecNumber>
    </recommendedName>
</protein>
<comment type="function">
    <text evidence="1">Retinol dehydrogenase with a clear preference for NADP. Converts all-trans-retinol to all-trans-retinal. Has no detectable activity towards 11-cis-retinol, 9-cis-retinol and 13-cis-retinol (By similarity).</text>
</comment>
<comment type="catalytic activity">
    <reaction>
        <text>all-trans-retinol + NADP(+) = all-trans-retinal + NADPH + H(+)</text>
        <dbReference type="Rhea" id="RHEA:25033"/>
        <dbReference type="ChEBI" id="CHEBI:15378"/>
        <dbReference type="ChEBI" id="CHEBI:17336"/>
        <dbReference type="ChEBI" id="CHEBI:17898"/>
        <dbReference type="ChEBI" id="CHEBI:57783"/>
        <dbReference type="ChEBI" id="CHEBI:58349"/>
        <dbReference type="EC" id="1.1.1.300"/>
    </reaction>
</comment>
<comment type="pathway">
    <text>Cofactor metabolism; retinol metabolism.</text>
</comment>
<comment type="subcellular location">
    <subcellularLocation>
        <location evidence="4">Microsome membrane</location>
        <topology evidence="4">Single-pass membrane protein</topology>
    </subcellularLocation>
    <subcellularLocation>
        <location evidence="4">Endoplasmic reticulum membrane</location>
        <topology evidence="4">Single-pass membrane protein</topology>
    </subcellularLocation>
</comment>
<comment type="similarity">
    <text evidence="4">Belongs to the short-chain dehydrogenases/reductases (SDR) family.</text>
</comment>
<organism>
    <name type="scientific">Danio rerio</name>
    <name type="common">Zebrafish</name>
    <name type="synonym">Brachydanio rerio</name>
    <dbReference type="NCBI Taxonomy" id="7955"/>
    <lineage>
        <taxon>Eukaryota</taxon>
        <taxon>Metazoa</taxon>
        <taxon>Chordata</taxon>
        <taxon>Craniata</taxon>
        <taxon>Vertebrata</taxon>
        <taxon>Euteleostomi</taxon>
        <taxon>Actinopterygii</taxon>
        <taxon>Neopterygii</taxon>
        <taxon>Teleostei</taxon>
        <taxon>Ostariophysi</taxon>
        <taxon>Cypriniformes</taxon>
        <taxon>Danionidae</taxon>
        <taxon>Danioninae</taxon>
        <taxon>Danio</taxon>
    </lineage>
</organism>